<evidence type="ECO:0000255" key="1">
    <source>
        <dbReference type="HAMAP-Rule" id="MF_03123"/>
    </source>
</evidence>
<evidence type="ECO:0000255" key="2">
    <source>
        <dbReference type="PROSITE-ProRule" id="PRU01266"/>
    </source>
</evidence>
<dbReference type="EC" id="2.8.1.8" evidence="1"/>
<dbReference type="EMBL" id="CH891902">
    <property type="protein sequence ID" value="EDX00027.1"/>
    <property type="molecule type" value="Genomic_DNA"/>
</dbReference>
<dbReference type="SMR" id="B4IUG3"/>
<dbReference type="EnsemblMetazoa" id="FBtr0269263">
    <property type="protein sequence ID" value="FBpp0267755"/>
    <property type="gene ID" value="FBgn0239951"/>
</dbReference>
<dbReference type="EnsemblMetazoa" id="XM_002086589.3">
    <property type="protein sequence ID" value="XP_002086625.1"/>
    <property type="gene ID" value="LOC6539741"/>
</dbReference>
<dbReference type="GeneID" id="6539741"/>
<dbReference type="KEGG" id="dya:Dyak_GE22745"/>
<dbReference type="CTD" id="40259"/>
<dbReference type="eggNOG" id="KOG2672">
    <property type="taxonomic scope" value="Eukaryota"/>
</dbReference>
<dbReference type="HOGENOM" id="CLU_033144_1_2_1"/>
<dbReference type="OMA" id="PYCDIDF"/>
<dbReference type="OrthoDB" id="3231at2759"/>
<dbReference type="PhylomeDB" id="B4IUG3"/>
<dbReference type="UniPathway" id="UPA00538">
    <property type="reaction ID" value="UER00593"/>
</dbReference>
<dbReference type="Proteomes" id="UP000002282">
    <property type="component" value="Unassembled WGS sequence"/>
</dbReference>
<dbReference type="GO" id="GO:0005739">
    <property type="term" value="C:mitochondrion"/>
    <property type="evidence" value="ECO:0007669"/>
    <property type="project" value="UniProtKB-SubCell"/>
</dbReference>
<dbReference type="GO" id="GO:0051539">
    <property type="term" value="F:4 iron, 4 sulfur cluster binding"/>
    <property type="evidence" value="ECO:0007669"/>
    <property type="project" value="UniProtKB-UniRule"/>
</dbReference>
<dbReference type="GO" id="GO:0016992">
    <property type="term" value="F:lipoate synthase activity"/>
    <property type="evidence" value="ECO:0007669"/>
    <property type="project" value="UniProtKB-UniRule"/>
</dbReference>
<dbReference type="GO" id="GO:0046872">
    <property type="term" value="F:metal ion binding"/>
    <property type="evidence" value="ECO:0007669"/>
    <property type="project" value="UniProtKB-KW"/>
</dbReference>
<dbReference type="CDD" id="cd01335">
    <property type="entry name" value="Radical_SAM"/>
    <property type="match status" value="1"/>
</dbReference>
<dbReference type="FunFam" id="3.20.20.70:FF:000036">
    <property type="entry name" value="Lipoyl synthase, mitochondrial"/>
    <property type="match status" value="1"/>
</dbReference>
<dbReference type="Gene3D" id="3.20.20.70">
    <property type="entry name" value="Aldolase class I"/>
    <property type="match status" value="1"/>
</dbReference>
<dbReference type="HAMAP" id="MF_00206">
    <property type="entry name" value="Lipoyl_synth"/>
    <property type="match status" value="1"/>
</dbReference>
<dbReference type="InterPro" id="IPR013785">
    <property type="entry name" value="Aldolase_TIM"/>
</dbReference>
<dbReference type="InterPro" id="IPR006638">
    <property type="entry name" value="Elp3/MiaA/NifB-like_rSAM"/>
</dbReference>
<dbReference type="InterPro" id="IPR031691">
    <property type="entry name" value="LIAS_N"/>
</dbReference>
<dbReference type="InterPro" id="IPR003698">
    <property type="entry name" value="Lipoyl_synth"/>
</dbReference>
<dbReference type="InterPro" id="IPR007197">
    <property type="entry name" value="rSAM"/>
</dbReference>
<dbReference type="NCBIfam" id="TIGR00510">
    <property type="entry name" value="lipA"/>
    <property type="match status" value="1"/>
</dbReference>
<dbReference type="NCBIfam" id="NF004019">
    <property type="entry name" value="PRK05481.1"/>
    <property type="match status" value="1"/>
</dbReference>
<dbReference type="NCBIfam" id="NF009544">
    <property type="entry name" value="PRK12928.1"/>
    <property type="match status" value="1"/>
</dbReference>
<dbReference type="PANTHER" id="PTHR10949">
    <property type="entry name" value="LIPOYL SYNTHASE"/>
    <property type="match status" value="1"/>
</dbReference>
<dbReference type="PANTHER" id="PTHR10949:SF0">
    <property type="entry name" value="LIPOYL SYNTHASE, MITOCHONDRIAL"/>
    <property type="match status" value="1"/>
</dbReference>
<dbReference type="Pfam" id="PF16881">
    <property type="entry name" value="LIAS_N"/>
    <property type="match status" value="1"/>
</dbReference>
<dbReference type="Pfam" id="PF04055">
    <property type="entry name" value="Radical_SAM"/>
    <property type="match status" value="1"/>
</dbReference>
<dbReference type="PIRSF" id="PIRSF005963">
    <property type="entry name" value="Lipoyl_synth"/>
    <property type="match status" value="1"/>
</dbReference>
<dbReference type="SFLD" id="SFLDF00271">
    <property type="entry name" value="lipoyl_synthase"/>
    <property type="match status" value="1"/>
</dbReference>
<dbReference type="SFLD" id="SFLDS00029">
    <property type="entry name" value="Radical_SAM"/>
    <property type="match status" value="1"/>
</dbReference>
<dbReference type="SMART" id="SM00729">
    <property type="entry name" value="Elp3"/>
    <property type="match status" value="1"/>
</dbReference>
<dbReference type="SUPFAM" id="SSF102114">
    <property type="entry name" value="Radical SAM enzymes"/>
    <property type="match status" value="1"/>
</dbReference>
<dbReference type="PROSITE" id="PS51918">
    <property type="entry name" value="RADICAL_SAM"/>
    <property type="match status" value="1"/>
</dbReference>
<proteinExistence type="inferred from homology"/>
<protein>
    <recommendedName>
        <fullName>Lipoyl synthase 1, mitochondrial</fullName>
        <ecNumber evidence="1">2.8.1.8</ecNumber>
    </recommendedName>
    <alternativeName>
        <fullName evidence="1">Lipoate synthase 1</fullName>
        <shortName evidence="1">LS 1</shortName>
        <shortName evidence="1">Lip-syn 1</shortName>
    </alternativeName>
    <alternativeName>
        <fullName evidence="1">Lipoic acid synthase 1</fullName>
    </alternativeName>
</protein>
<keyword id="KW-0004">4Fe-4S</keyword>
<keyword id="KW-0408">Iron</keyword>
<keyword id="KW-0411">Iron-sulfur</keyword>
<keyword id="KW-0479">Metal-binding</keyword>
<keyword id="KW-0496">Mitochondrion</keyword>
<keyword id="KW-0949">S-adenosyl-L-methionine</keyword>
<keyword id="KW-0808">Transferase</keyword>
<accession>B4IUG3</accession>
<organism>
    <name type="scientific">Drosophila yakuba</name>
    <name type="common">Fruit fly</name>
    <dbReference type="NCBI Taxonomy" id="7245"/>
    <lineage>
        <taxon>Eukaryota</taxon>
        <taxon>Metazoa</taxon>
        <taxon>Ecdysozoa</taxon>
        <taxon>Arthropoda</taxon>
        <taxon>Hexapoda</taxon>
        <taxon>Insecta</taxon>
        <taxon>Pterygota</taxon>
        <taxon>Neoptera</taxon>
        <taxon>Endopterygota</taxon>
        <taxon>Diptera</taxon>
        <taxon>Brachycera</taxon>
        <taxon>Muscomorpha</taxon>
        <taxon>Ephydroidea</taxon>
        <taxon>Drosophilidae</taxon>
        <taxon>Drosophila</taxon>
        <taxon>Sophophora</taxon>
    </lineage>
</organism>
<name>LIAS1_DROYA</name>
<gene>
    <name evidence="1" type="primary">Las1</name>
    <name type="ORF">GE22745</name>
</gene>
<feature type="chain" id="PRO_0000398224" description="Lipoyl synthase 1, mitochondrial">
    <location>
        <begin position="1"/>
        <end position="379"/>
    </location>
</feature>
<feature type="domain" description="Radical SAM core" evidence="2">
    <location>
        <begin position="122"/>
        <end position="341"/>
    </location>
</feature>
<feature type="binding site" evidence="1">
    <location>
        <position position="106"/>
    </location>
    <ligand>
        <name>[4Fe-4S] cluster</name>
        <dbReference type="ChEBI" id="CHEBI:49883"/>
        <label>1</label>
    </ligand>
</feature>
<feature type="binding site" evidence="1">
    <location>
        <position position="111"/>
    </location>
    <ligand>
        <name>[4Fe-4S] cluster</name>
        <dbReference type="ChEBI" id="CHEBI:49883"/>
        <label>1</label>
    </ligand>
</feature>
<feature type="binding site" evidence="1">
    <location>
        <position position="117"/>
    </location>
    <ligand>
        <name>[4Fe-4S] cluster</name>
        <dbReference type="ChEBI" id="CHEBI:49883"/>
        <label>1</label>
    </ligand>
</feature>
<feature type="binding site" evidence="1">
    <location>
        <position position="137"/>
    </location>
    <ligand>
        <name>[4Fe-4S] cluster</name>
        <dbReference type="ChEBI" id="CHEBI:49883"/>
        <label>2</label>
        <note>4Fe-4S-S-AdoMet</note>
    </ligand>
</feature>
<feature type="binding site" evidence="1">
    <location>
        <position position="141"/>
    </location>
    <ligand>
        <name>[4Fe-4S] cluster</name>
        <dbReference type="ChEBI" id="CHEBI:49883"/>
        <label>2</label>
        <note>4Fe-4S-S-AdoMet</note>
    </ligand>
</feature>
<feature type="binding site" evidence="1">
    <location>
        <position position="144"/>
    </location>
    <ligand>
        <name>[4Fe-4S] cluster</name>
        <dbReference type="ChEBI" id="CHEBI:49883"/>
        <label>2</label>
        <note>4Fe-4S-S-AdoMet</note>
    </ligand>
</feature>
<feature type="binding site" evidence="1">
    <location>
        <position position="352"/>
    </location>
    <ligand>
        <name>[4Fe-4S] cluster</name>
        <dbReference type="ChEBI" id="CHEBI:49883"/>
        <label>1</label>
    </ligand>
</feature>
<sequence>MFGMLRALKTHVEAPIVVATRAASTNAEKLEEIRERLAKGPNFQDFVQNPDNSRSEWENYEGKLRREKGEEQRLRLPPWLKTTIPVGKNYAKIKAQMRELKLSTVCEEARCPNIGECWGGGEHGTQTATIMLMGDTCTRGCRFCSVKTARKPPPLDVNEPVNTATAIASWGLDYIVLTSVDRDDLPDGGSKHIAETVREIKARNSNIFVECLVPDFRGNLECVETIANSGLDVYAHNIETVEKLTPYVRDRRAHYRQTLQVLTEAKRFNPNLITKSSIMLGLGETDEEIESTLKDLRTAGVDCVTLGQYMQPTNKHLKVIEYVTPEKFKHWEERGNELGFLYTASGPLVRSSYKAGEFFITSILENRKKRQNATELSKE</sequence>
<reference key="1">
    <citation type="journal article" date="2007" name="Nature">
        <title>Evolution of genes and genomes on the Drosophila phylogeny.</title>
        <authorList>
            <consortium name="Drosophila 12 genomes consortium"/>
        </authorList>
    </citation>
    <scope>NUCLEOTIDE SEQUENCE [LARGE SCALE GENOMIC DNA]</scope>
    <source>
        <strain>Tai18E2 / Tucson 14021-0261.01</strain>
    </source>
</reference>
<comment type="function">
    <text evidence="1">Catalyzes the radical-mediated insertion of two sulfur atoms into the C-6 and C-8 positions of the octanoyl moiety bound to the lipoyl domains of lipoate-dependent enzymes, thereby converting the octanoylated domains into lipoylated derivatives.</text>
</comment>
<comment type="catalytic activity">
    <reaction evidence="1">
        <text>[[Fe-S] cluster scaffold protein carrying a second [4Fe-4S](2+) cluster] + N(6)-octanoyl-L-lysyl-[protein] + 2 oxidized [2Fe-2S]-[ferredoxin] + 2 S-adenosyl-L-methionine + 4 H(+) = [[Fe-S] cluster scaffold protein] + N(6)-[(R)-dihydrolipoyl]-L-lysyl-[protein] + 4 Fe(3+) + 2 hydrogen sulfide + 2 5'-deoxyadenosine + 2 L-methionine + 2 reduced [2Fe-2S]-[ferredoxin]</text>
        <dbReference type="Rhea" id="RHEA:16585"/>
        <dbReference type="Rhea" id="RHEA-COMP:9928"/>
        <dbReference type="Rhea" id="RHEA-COMP:10000"/>
        <dbReference type="Rhea" id="RHEA-COMP:10001"/>
        <dbReference type="Rhea" id="RHEA-COMP:10475"/>
        <dbReference type="Rhea" id="RHEA-COMP:14568"/>
        <dbReference type="Rhea" id="RHEA-COMP:14569"/>
        <dbReference type="ChEBI" id="CHEBI:15378"/>
        <dbReference type="ChEBI" id="CHEBI:17319"/>
        <dbReference type="ChEBI" id="CHEBI:29034"/>
        <dbReference type="ChEBI" id="CHEBI:29919"/>
        <dbReference type="ChEBI" id="CHEBI:33722"/>
        <dbReference type="ChEBI" id="CHEBI:33737"/>
        <dbReference type="ChEBI" id="CHEBI:33738"/>
        <dbReference type="ChEBI" id="CHEBI:57844"/>
        <dbReference type="ChEBI" id="CHEBI:59789"/>
        <dbReference type="ChEBI" id="CHEBI:78809"/>
        <dbReference type="ChEBI" id="CHEBI:83100"/>
        <dbReference type="EC" id="2.8.1.8"/>
    </reaction>
</comment>
<comment type="cofactor">
    <cofactor evidence="1">
        <name>[4Fe-4S] cluster</name>
        <dbReference type="ChEBI" id="CHEBI:49883"/>
    </cofactor>
    <text evidence="1">Binds 2 [4Fe-4S] clusters per subunit. One cluster is coordinated with 3 cysteines and an exchangeable S-adenosyl-L-methionine.</text>
</comment>
<comment type="pathway">
    <text evidence="1">Protein modification; protein lipoylation via endogenous pathway; protein N(6)-(lipoyl)lysine from octanoyl-[acyl-carrier-protein]: step 2/2.</text>
</comment>
<comment type="subcellular location">
    <subcellularLocation>
        <location evidence="1">Mitochondrion</location>
    </subcellularLocation>
</comment>
<comment type="miscellaneous">
    <text evidence="1">This protein may be expected to contain an N-terminal transit peptide but none has been predicted.</text>
</comment>
<comment type="similarity">
    <text evidence="1">Belongs to the radical SAM superfamily. Lipoyl synthase family.</text>
</comment>